<accession>A4VSN1</accession>
<evidence type="ECO:0000250" key="1"/>
<evidence type="ECO:0000255" key="2">
    <source>
        <dbReference type="HAMAP-Rule" id="MF_00403"/>
    </source>
</evidence>
<evidence type="ECO:0000256" key="3">
    <source>
        <dbReference type="SAM" id="MobiDB-lite"/>
    </source>
</evidence>
<evidence type="ECO:0000305" key="4"/>
<feature type="chain" id="PRO_0000296036" description="Small ribosomal subunit protein uS12">
    <location>
        <begin position="1"/>
        <end position="137"/>
    </location>
</feature>
<feature type="region of interest" description="Disordered" evidence="3">
    <location>
        <begin position="1"/>
        <end position="57"/>
    </location>
</feature>
<feature type="compositionally biased region" description="Basic residues" evidence="3">
    <location>
        <begin position="9"/>
        <end position="20"/>
    </location>
</feature>
<feature type="modified residue" description="3-methylthioaspartic acid" evidence="1">
    <location>
        <position position="102"/>
    </location>
</feature>
<comment type="function">
    <text evidence="2">With S4 and S5 plays an important role in translational accuracy.</text>
</comment>
<comment type="function">
    <text evidence="2">Interacts with and stabilizes bases of the 16S rRNA that are involved in tRNA selection in the A site and with the mRNA backbone. Located at the interface of the 30S and 50S subunits, it traverses the body of the 30S subunit contacting proteins on the other side and probably holding the rRNA structure together. The combined cluster of proteins S8, S12 and S17 appears to hold together the shoulder and platform of the 30S subunit.</text>
</comment>
<comment type="subunit">
    <text evidence="2">Part of the 30S ribosomal subunit. Contacts proteins S8 and S17. May interact with IF1 in the 30S initiation complex.</text>
</comment>
<comment type="similarity">
    <text evidence="2">Belongs to the universal ribosomal protein uS12 family.</text>
</comment>
<proteinExistence type="inferred from homology"/>
<protein>
    <recommendedName>
        <fullName evidence="2">Small ribosomal subunit protein uS12</fullName>
    </recommendedName>
    <alternativeName>
        <fullName evidence="4">30S ribosomal protein S12</fullName>
    </alternativeName>
</protein>
<sequence>MPTINQLVRKPRKSKVKKSKSPALNVGYNSRKKVQTNVSSPQKRGVATRVGTMTPKKPNSALRKFARVRLTNLIEVTAYIPGIGHNLQKHSVVLLRGGRVKDLPGVRYHIVRGALDTAGVNDRKQGRSKYGTKRPKG</sequence>
<organism>
    <name type="scientific">Streptococcus suis (strain 05ZYH33)</name>
    <dbReference type="NCBI Taxonomy" id="391295"/>
    <lineage>
        <taxon>Bacteria</taxon>
        <taxon>Bacillati</taxon>
        <taxon>Bacillota</taxon>
        <taxon>Bacilli</taxon>
        <taxon>Lactobacillales</taxon>
        <taxon>Streptococcaceae</taxon>
        <taxon>Streptococcus</taxon>
    </lineage>
</organism>
<gene>
    <name evidence="2" type="primary">rpsL</name>
    <name type="ordered locus">SSU05_0150</name>
</gene>
<dbReference type="EMBL" id="CP000407">
    <property type="protein sequence ID" value="ABP89120.1"/>
    <property type="molecule type" value="Genomic_DNA"/>
</dbReference>
<dbReference type="SMR" id="A4VSN1"/>
<dbReference type="STRING" id="391295.SSU05_0150"/>
<dbReference type="KEGG" id="ssu:SSU05_0150"/>
<dbReference type="eggNOG" id="COG0048">
    <property type="taxonomic scope" value="Bacteria"/>
</dbReference>
<dbReference type="HOGENOM" id="CLU_104295_1_2_9"/>
<dbReference type="GO" id="GO:0015935">
    <property type="term" value="C:small ribosomal subunit"/>
    <property type="evidence" value="ECO:0007669"/>
    <property type="project" value="InterPro"/>
</dbReference>
<dbReference type="GO" id="GO:0019843">
    <property type="term" value="F:rRNA binding"/>
    <property type="evidence" value="ECO:0007669"/>
    <property type="project" value="UniProtKB-UniRule"/>
</dbReference>
<dbReference type="GO" id="GO:0003735">
    <property type="term" value="F:structural constituent of ribosome"/>
    <property type="evidence" value="ECO:0007669"/>
    <property type="project" value="InterPro"/>
</dbReference>
<dbReference type="GO" id="GO:0000049">
    <property type="term" value="F:tRNA binding"/>
    <property type="evidence" value="ECO:0007669"/>
    <property type="project" value="UniProtKB-UniRule"/>
</dbReference>
<dbReference type="GO" id="GO:0006412">
    <property type="term" value="P:translation"/>
    <property type="evidence" value="ECO:0007669"/>
    <property type="project" value="UniProtKB-UniRule"/>
</dbReference>
<dbReference type="CDD" id="cd03368">
    <property type="entry name" value="Ribosomal_S12"/>
    <property type="match status" value="1"/>
</dbReference>
<dbReference type="FunFam" id="2.40.50.140:FF:000001">
    <property type="entry name" value="30S ribosomal protein S12"/>
    <property type="match status" value="1"/>
</dbReference>
<dbReference type="Gene3D" id="2.40.50.140">
    <property type="entry name" value="Nucleic acid-binding proteins"/>
    <property type="match status" value="1"/>
</dbReference>
<dbReference type="HAMAP" id="MF_00403_B">
    <property type="entry name" value="Ribosomal_uS12_B"/>
    <property type="match status" value="1"/>
</dbReference>
<dbReference type="InterPro" id="IPR012340">
    <property type="entry name" value="NA-bd_OB-fold"/>
</dbReference>
<dbReference type="InterPro" id="IPR006032">
    <property type="entry name" value="Ribosomal_uS12"/>
</dbReference>
<dbReference type="InterPro" id="IPR005679">
    <property type="entry name" value="Ribosomal_uS12_bac"/>
</dbReference>
<dbReference type="NCBIfam" id="TIGR00981">
    <property type="entry name" value="rpsL_bact"/>
    <property type="match status" value="1"/>
</dbReference>
<dbReference type="PANTHER" id="PTHR11652">
    <property type="entry name" value="30S RIBOSOMAL PROTEIN S12 FAMILY MEMBER"/>
    <property type="match status" value="1"/>
</dbReference>
<dbReference type="Pfam" id="PF00164">
    <property type="entry name" value="Ribosom_S12_S23"/>
    <property type="match status" value="1"/>
</dbReference>
<dbReference type="PIRSF" id="PIRSF002133">
    <property type="entry name" value="Ribosomal_S12/S23"/>
    <property type="match status" value="1"/>
</dbReference>
<dbReference type="PRINTS" id="PR01034">
    <property type="entry name" value="RIBOSOMALS12"/>
</dbReference>
<dbReference type="SUPFAM" id="SSF50249">
    <property type="entry name" value="Nucleic acid-binding proteins"/>
    <property type="match status" value="1"/>
</dbReference>
<dbReference type="PROSITE" id="PS00055">
    <property type="entry name" value="RIBOSOMAL_S12"/>
    <property type="match status" value="1"/>
</dbReference>
<name>RS12_STRSY</name>
<keyword id="KW-0488">Methylation</keyword>
<keyword id="KW-0687">Ribonucleoprotein</keyword>
<keyword id="KW-0689">Ribosomal protein</keyword>
<keyword id="KW-0694">RNA-binding</keyword>
<keyword id="KW-0699">rRNA-binding</keyword>
<keyword id="KW-0820">tRNA-binding</keyword>
<reference key="1">
    <citation type="journal article" date="2007" name="PLoS ONE">
        <title>A glimpse of streptococcal toxic shock syndrome from comparative genomics of S. suis 2 Chinese isolates.</title>
        <authorList>
            <person name="Chen C."/>
            <person name="Tang J."/>
            <person name="Dong W."/>
            <person name="Wang C."/>
            <person name="Feng Y."/>
            <person name="Wang J."/>
            <person name="Zheng F."/>
            <person name="Pan X."/>
            <person name="Liu D."/>
            <person name="Li M."/>
            <person name="Song Y."/>
            <person name="Zhu X."/>
            <person name="Sun H."/>
            <person name="Feng T."/>
            <person name="Guo Z."/>
            <person name="Ju A."/>
            <person name="Ge J."/>
            <person name="Dong Y."/>
            <person name="Sun W."/>
            <person name="Jiang Y."/>
            <person name="Wang J."/>
            <person name="Yan J."/>
            <person name="Yang H."/>
            <person name="Wang X."/>
            <person name="Gao G.F."/>
            <person name="Yang R."/>
            <person name="Wang J."/>
            <person name="Yu J."/>
        </authorList>
    </citation>
    <scope>NUCLEOTIDE SEQUENCE [LARGE SCALE GENOMIC DNA]</scope>
    <source>
        <strain>05ZYH33</strain>
    </source>
</reference>